<feature type="chain" id="PRO_0000063191" description="Uridine phosphorylase 1">
    <location>
        <begin position="1"/>
        <end position="310"/>
    </location>
</feature>
<feature type="binding site" evidence="1 12">
    <location>
        <position position="60"/>
    </location>
    <ligand>
        <name>phosphate</name>
        <dbReference type="ChEBI" id="CHEBI:43474"/>
    </ligand>
</feature>
<feature type="binding site" evidence="1 12">
    <location>
        <position position="94"/>
    </location>
    <ligand>
        <name>phosphate</name>
        <dbReference type="ChEBI" id="CHEBI:43474"/>
    </ligand>
</feature>
<feature type="binding site" evidence="1 12">
    <location>
        <begin position="138"/>
        <end position="141"/>
    </location>
    <ligand>
        <name>phosphate</name>
        <dbReference type="ChEBI" id="CHEBI:43474"/>
    </ligand>
</feature>
<feature type="binding site" evidence="9 12 13">
    <location>
        <begin position="142"/>
        <end position="143"/>
    </location>
    <ligand>
        <name>uridine</name>
        <dbReference type="ChEBI" id="CHEBI:16704"/>
    </ligand>
</feature>
<feature type="binding site" evidence="8 9 12 13">
    <location>
        <begin position="217"/>
        <end position="219"/>
    </location>
    <ligand>
        <name>uridine</name>
        <dbReference type="ChEBI" id="CHEBI:16704"/>
    </ligand>
</feature>
<feature type="splice variant" id="VSP_001279" description="In isoform 2." evidence="5">
    <original>NDCPVRLLNPNIAKMKEDILYH</original>
    <variation>KSGARHCGHNRAGSGYLLQGRV</variation>
    <location>
        <begin position="15"/>
        <end position="36"/>
    </location>
</feature>
<feature type="splice variant" id="VSP_001280" description="In isoform 2." evidence="5">
    <location>
        <begin position="37"/>
        <end position="310"/>
    </location>
</feature>
<feature type="helix" evidence="15">
    <location>
        <begin position="26"/>
        <end position="28"/>
    </location>
</feature>
<feature type="turn" evidence="15">
    <location>
        <begin position="35"/>
        <end position="38"/>
    </location>
</feature>
<feature type="turn" evidence="15">
    <location>
        <begin position="41"/>
        <end position="43"/>
    </location>
</feature>
<feature type="helix" evidence="15">
    <location>
        <begin position="46"/>
        <end position="50"/>
    </location>
</feature>
<feature type="strand" evidence="15">
    <location>
        <begin position="55"/>
        <end position="60"/>
    </location>
</feature>
<feature type="helix" evidence="15">
    <location>
        <begin position="62"/>
        <end position="76"/>
    </location>
</feature>
<feature type="strand" evidence="14">
    <location>
        <begin position="81"/>
        <end position="83"/>
    </location>
</feature>
<feature type="turn" evidence="15">
    <location>
        <begin position="88"/>
        <end position="91"/>
    </location>
</feature>
<feature type="strand" evidence="15">
    <location>
        <begin position="97"/>
        <end position="100"/>
    </location>
</feature>
<feature type="strand" evidence="15">
    <location>
        <begin position="103"/>
        <end position="107"/>
    </location>
</feature>
<feature type="helix" evidence="15">
    <location>
        <begin position="112"/>
        <end position="128"/>
    </location>
</feature>
<feature type="strand" evidence="15">
    <location>
        <begin position="135"/>
        <end position="147"/>
    </location>
</feature>
<feature type="strand" evidence="15">
    <location>
        <begin position="152"/>
        <end position="159"/>
    </location>
</feature>
<feature type="strand" evidence="15">
    <location>
        <begin position="165"/>
        <end position="171"/>
    </location>
</feature>
<feature type="strand" evidence="15">
    <location>
        <begin position="174"/>
        <end position="179"/>
    </location>
</feature>
<feature type="helix" evidence="15">
    <location>
        <begin position="184"/>
        <end position="197"/>
    </location>
</feature>
<feature type="strand" evidence="15">
    <location>
        <begin position="202"/>
        <end position="209"/>
    </location>
</feature>
<feature type="helix" evidence="15">
    <location>
        <begin position="215"/>
        <end position="217"/>
    </location>
</feature>
<feature type="strand" evidence="15">
    <location>
        <begin position="222"/>
        <end position="224"/>
    </location>
</feature>
<feature type="helix" evidence="15">
    <location>
        <begin position="229"/>
        <end position="241"/>
    </location>
</feature>
<feature type="strand" evidence="15">
    <location>
        <begin position="244"/>
        <end position="250"/>
    </location>
</feature>
<feature type="helix" evidence="15">
    <location>
        <begin position="251"/>
        <end position="260"/>
    </location>
</feature>
<feature type="strand" evidence="15">
    <location>
        <begin position="264"/>
        <end position="274"/>
    </location>
</feature>
<feature type="helix" evidence="14">
    <location>
        <begin position="275"/>
        <end position="277"/>
    </location>
</feature>
<feature type="helix" evidence="15">
    <location>
        <begin position="285"/>
        <end position="292"/>
    </location>
</feature>
<feature type="helix" evidence="15">
    <location>
        <begin position="294"/>
        <end position="306"/>
    </location>
</feature>
<organism>
    <name type="scientific">Homo sapiens</name>
    <name type="common">Human</name>
    <dbReference type="NCBI Taxonomy" id="9606"/>
    <lineage>
        <taxon>Eukaryota</taxon>
        <taxon>Metazoa</taxon>
        <taxon>Chordata</taxon>
        <taxon>Craniata</taxon>
        <taxon>Vertebrata</taxon>
        <taxon>Euteleostomi</taxon>
        <taxon>Mammalia</taxon>
        <taxon>Eutheria</taxon>
        <taxon>Euarchontoglires</taxon>
        <taxon>Primates</taxon>
        <taxon>Haplorrhini</taxon>
        <taxon>Catarrhini</taxon>
        <taxon>Hominidae</taxon>
        <taxon>Homo</taxon>
    </lineage>
</organism>
<keyword id="KW-0002">3D-structure</keyword>
<keyword id="KW-0025">Alternative splicing</keyword>
<keyword id="KW-0328">Glycosyltransferase</keyword>
<keyword id="KW-1267">Proteomics identification</keyword>
<keyword id="KW-1185">Reference proteome</keyword>
<keyword id="KW-0808">Transferase</keyword>
<accession>Q16831</accession>
<accession>D3DVM4</accession>
<accession>Q15362</accession>
<protein>
    <recommendedName>
        <fullName evidence="4">Uridine phosphorylase 1</fullName>
        <shortName>UPase 1</shortName>
        <shortName>UrdPase 1</shortName>
        <ecNumber evidence="3">2.4.2.3</ecNumber>
    </recommendedName>
</protein>
<sequence>MAATGANAEKAESHNDCPVRLLNPNIAKMKEDILYHFNLTTSRHNFPALFGDVKFVCVGGSPSRMKAFIRCVGAELGLDCPGRDYPNICAGTDRYAMYKVGPVLSVSHGMGIPSISIMLHELIKLLYYARCSNVTIIRIGTSGGIGLEPGTVVITEQAVDTCFKAEFEQIVLGKRVIRKTDLNKKLVQELLLCSAELSEFTTVVGNTMCTLDFYEGQGRLDGALCSYTEKDKQAYLEAAYAAGVRNIEMESSVFAAMCSACGLQAAVVCVTLLNRLEGDQISSPRNVLSEYQQRPQRLVSYFIKKKLSKA</sequence>
<gene>
    <name evidence="11" type="primary">UPP1</name>
    <name type="synonym">UP</name>
</gene>
<comment type="function">
    <text evidence="3 7">Catalyzes the reversible phosphorylytic cleavage of uridine to uracil and ribose-1-phosphate which can then be utilized as carbon and energy sources or in the rescue of pyrimidine bases for nucleotide synthesis (PubMed:7488099). Shows broad substrate specificity and can also accept deoxyuridine and other analogous compounds (Probable).</text>
</comment>
<comment type="catalytic activity">
    <reaction evidence="3">
        <text>uridine + phosphate = alpha-D-ribose 1-phosphate + uracil</text>
        <dbReference type="Rhea" id="RHEA:24388"/>
        <dbReference type="ChEBI" id="CHEBI:16704"/>
        <dbReference type="ChEBI" id="CHEBI:17568"/>
        <dbReference type="ChEBI" id="CHEBI:43474"/>
        <dbReference type="ChEBI" id="CHEBI:57720"/>
        <dbReference type="EC" id="2.4.2.3"/>
    </reaction>
    <physiologicalReaction direction="left-to-right" evidence="10">
        <dbReference type="Rhea" id="RHEA:24389"/>
    </physiologicalReaction>
</comment>
<comment type="catalytic activity">
    <reaction evidence="7">
        <text>2'-deoxyuridine + phosphate = 2-deoxy-alpha-D-ribose 1-phosphate + uracil</text>
        <dbReference type="Rhea" id="RHEA:22824"/>
        <dbReference type="ChEBI" id="CHEBI:16450"/>
        <dbReference type="ChEBI" id="CHEBI:17568"/>
        <dbReference type="ChEBI" id="CHEBI:43474"/>
        <dbReference type="ChEBI" id="CHEBI:57259"/>
    </reaction>
    <physiologicalReaction direction="left-to-right" evidence="7">
        <dbReference type="Rhea" id="RHEA:22825"/>
    </physiologicalReaction>
</comment>
<comment type="pathway">
    <text evidence="10">Pyrimidine metabolism; UMP biosynthesis via salvage pathway; uracil from uridine (phosphorylase route): step 1/1.</text>
</comment>
<comment type="subunit">
    <text evidence="1 2">Homodimer.</text>
</comment>
<comment type="alternative products">
    <event type="alternative splicing"/>
    <isoform>
        <id>Q16831-1</id>
        <name>1</name>
        <sequence type="displayed"/>
    </isoform>
    <isoform>
        <id>Q16831-2</id>
        <name>2</name>
        <name>Truncated</name>
        <sequence type="described" ref="VSP_001279 VSP_001280"/>
    </isoform>
</comment>
<comment type="induction">
    <text evidence="3">By vitamin D3 and a mixture of inflammatory cytokines: TNF, IL1/interleukin-1 and IFNG/IFN-gamma.</text>
</comment>
<comment type="miscellaneous">
    <molecule>Isoform 2</molecule>
    <text evidence="6">Inactive.</text>
</comment>
<comment type="similarity">
    <text evidence="6">Belongs to the PNP/UDP phosphorylase family.</text>
</comment>
<name>UPP1_HUMAN</name>
<reference key="1">
    <citation type="journal article" date="1995" name="Biochem. Biophys. Res. Commun.">
        <title>Cloning and expression of human uridine phosphorylase.</title>
        <authorList>
            <person name="Watanabe S."/>
            <person name="Uchida T."/>
        </authorList>
    </citation>
    <scope>NUCLEOTIDE SEQUENCE [MRNA] (ISOFORMS 1 AND 2)</scope>
    <scope>FUNCTION</scope>
    <scope>CATALYTIC ACTIVITY</scope>
    <source>
        <tissue>Colon</tissue>
    </source>
</reference>
<reference key="2">
    <citation type="submission" date="2003-05" db="EMBL/GenBank/DDBJ databases">
        <title>Cloning of human full-length CDSs in BD Creator(TM) system donor vector.</title>
        <authorList>
            <person name="Kalnine N."/>
            <person name="Chen X."/>
            <person name="Rolfs A."/>
            <person name="Halleck A."/>
            <person name="Hines L."/>
            <person name="Eisenstein S."/>
            <person name="Koundinya M."/>
            <person name="Raphael J."/>
            <person name="Moreira D."/>
            <person name="Kelley T."/>
            <person name="LaBaer J."/>
            <person name="Lin Y."/>
            <person name="Phelan M."/>
            <person name="Farmer A."/>
        </authorList>
    </citation>
    <scope>NUCLEOTIDE SEQUENCE [LARGE SCALE MRNA] (ISOFORM 1)</scope>
</reference>
<reference key="3">
    <citation type="submission" date="2005-09" db="EMBL/GenBank/DDBJ databases">
        <authorList>
            <person name="Mural R.J."/>
            <person name="Istrail S."/>
            <person name="Sutton G.G."/>
            <person name="Florea L."/>
            <person name="Halpern A.L."/>
            <person name="Mobarry C.M."/>
            <person name="Lippert R."/>
            <person name="Walenz B."/>
            <person name="Shatkay H."/>
            <person name="Dew I."/>
            <person name="Miller J.R."/>
            <person name="Flanigan M.J."/>
            <person name="Edwards N.J."/>
            <person name="Bolanos R."/>
            <person name="Fasulo D."/>
            <person name="Halldorsson B.V."/>
            <person name="Hannenhalli S."/>
            <person name="Turner R."/>
            <person name="Yooseph S."/>
            <person name="Lu F."/>
            <person name="Nusskern D.R."/>
            <person name="Shue B.C."/>
            <person name="Zheng X.H."/>
            <person name="Zhong F."/>
            <person name="Delcher A.L."/>
            <person name="Huson D.H."/>
            <person name="Kravitz S.A."/>
            <person name="Mouchard L."/>
            <person name="Reinert K."/>
            <person name="Remington K.A."/>
            <person name="Clark A.G."/>
            <person name="Waterman M.S."/>
            <person name="Eichler E.E."/>
            <person name="Adams M.D."/>
            <person name="Hunkapiller M.W."/>
            <person name="Myers E.W."/>
            <person name="Venter J.C."/>
        </authorList>
    </citation>
    <scope>NUCLEOTIDE SEQUENCE [LARGE SCALE GENOMIC DNA]</scope>
</reference>
<reference key="4">
    <citation type="journal article" date="2004" name="Genome Res.">
        <title>The status, quality, and expansion of the NIH full-length cDNA project: the Mammalian Gene Collection (MGC).</title>
        <authorList>
            <consortium name="The MGC Project Team"/>
        </authorList>
    </citation>
    <scope>NUCLEOTIDE SEQUENCE [LARGE SCALE MRNA] (ISOFORM 1)</scope>
    <source>
        <tissue>Ovary</tissue>
        <tissue>Placenta</tissue>
        <tissue>Skin</tissue>
    </source>
</reference>
<reference key="5">
    <citation type="journal article" date="1961" name="Biochim. Biophys. Acta">
        <title>Uridine and deoxyuridine phosphorylases from Ehrlich ascites tumor.</title>
        <authorList>
            <person name="Pontis H."/>
            <person name="Degerstedt G."/>
            <person name="Reichard P."/>
        </authorList>
    </citation>
    <scope>IDENTIFICATION</scope>
    <scope>FUNCTION</scope>
    <scope>CATALYTIC ACTIVITY</scope>
</reference>
<reference key="6">
    <citation type="journal article" date="2011" name="BMC Syst. Biol.">
        <title>Initial characterization of the human central proteome.</title>
        <authorList>
            <person name="Burkard T.R."/>
            <person name="Planyavsky M."/>
            <person name="Kaupe I."/>
            <person name="Breitwieser F.P."/>
            <person name="Buerckstuemmer T."/>
            <person name="Bennett K.L."/>
            <person name="Superti-Furga G."/>
            <person name="Colinge J."/>
        </authorList>
    </citation>
    <scope>IDENTIFICATION BY MASS SPECTROMETRY [LARGE SCALE ANALYSIS]</scope>
</reference>
<reference key="7">
    <citation type="journal article" date="2009" name="BMC Struct. Biol.">
        <title>Implications of the structure of human uridine phosphorylase 1 on the development of novel inhibitors for improving the therapeutic window of fluoropyrimidine chemotherapy.</title>
        <authorList>
            <person name="Roosild T.P."/>
            <person name="Castronovo S."/>
            <person name="Fabbiani M."/>
            <person name="Pizzorno G."/>
        </authorList>
    </citation>
    <scope>X-RAY CRYSTALLOGRAPHY (1.9 ANGSTROMS) ALONE AND IN COMPLEX WITH INHIBITOR BAU AND PHOSPHATE</scope>
    <scope>SUBUNIT</scope>
</reference>
<reference key="8">
    <citation type="journal article" date="2010" name="PLoS ONE">
        <title>Active site conformational dynamics in human uridine phosphorylase 1.</title>
        <authorList>
            <person name="Roosild T.P."/>
            <person name="Castronovo S."/>
        </authorList>
    </citation>
    <scope>X-RAY CRYSTALLOGRAPHY (2.3 ANGSTROMS) IN COMPLEX WITH 5-FLUOROURACIL</scope>
    <scope>SUBUNIT</scope>
</reference>
<dbReference type="EC" id="2.4.2.3" evidence="3"/>
<dbReference type="EMBL" id="X90858">
    <property type="protein sequence ID" value="CAA62369.1"/>
    <property type="molecule type" value="mRNA"/>
</dbReference>
<dbReference type="EMBL" id="X90858">
    <property type="protein sequence ID" value="CAA62370.1"/>
    <property type="molecule type" value="mRNA"/>
</dbReference>
<dbReference type="EMBL" id="BT006699">
    <property type="protein sequence ID" value="AAP35345.1"/>
    <property type="molecule type" value="mRNA"/>
</dbReference>
<dbReference type="EMBL" id="CH471128">
    <property type="protein sequence ID" value="EAW60994.1"/>
    <property type="molecule type" value="Genomic_DNA"/>
</dbReference>
<dbReference type="EMBL" id="CH471128">
    <property type="protein sequence ID" value="EAW60995.1"/>
    <property type="molecule type" value="Genomic_DNA"/>
</dbReference>
<dbReference type="EMBL" id="BC001405">
    <property type="protein sequence ID" value="AAH01405.1"/>
    <property type="molecule type" value="mRNA"/>
</dbReference>
<dbReference type="EMBL" id="BC007348">
    <property type="protein sequence ID" value="AAH07348.1"/>
    <property type="molecule type" value="mRNA"/>
</dbReference>
<dbReference type="EMBL" id="BC053592">
    <property type="protein sequence ID" value="AAH53592.1"/>
    <property type="status" value="ALT_SEQ"/>
    <property type="molecule type" value="mRNA"/>
</dbReference>
<dbReference type="CCDS" id="CCDS5507.1">
    <molecule id="Q16831-1"/>
</dbReference>
<dbReference type="PIR" id="JC4343">
    <property type="entry name" value="JC4343"/>
</dbReference>
<dbReference type="RefSeq" id="NP_001274355.1">
    <molecule id="Q16831-1"/>
    <property type="nucleotide sequence ID" value="NM_001287426.2"/>
</dbReference>
<dbReference type="RefSeq" id="NP_001274357.1">
    <property type="nucleotide sequence ID" value="NM_001287428.1"/>
</dbReference>
<dbReference type="RefSeq" id="NP_001274358.1">
    <property type="nucleotide sequence ID" value="NM_001287429.1"/>
</dbReference>
<dbReference type="RefSeq" id="NP_001274359.1">
    <property type="nucleotide sequence ID" value="NM_001287430.1"/>
</dbReference>
<dbReference type="RefSeq" id="NP_001349703.1">
    <molecule id="Q16831-1"/>
    <property type="nucleotide sequence ID" value="NM_001362774.2"/>
</dbReference>
<dbReference type="RefSeq" id="NP_003355.1">
    <molecule id="Q16831-1"/>
    <property type="nucleotide sequence ID" value="NM_003364.4"/>
</dbReference>
<dbReference type="RefSeq" id="XP_011513814.1">
    <molecule id="Q16831-1"/>
    <property type="nucleotide sequence ID" value="XM_011515512.3"/>
</dbReference>
<dbReference type="RefSeq" id="XP_054214904.1">
    <molecule id="Q16831-1"/>
    <property type="nucleotide sequence ID" value="XM_054358929.1"/>
</dbReference>
<dbReference type="PDB" id="3EUE">
    <property type="method" value="X-ray"/>
    <property type="resolution" value="2.30 A"/>
    <property type="chains" value="A=1-310"/>
</dbReference>
<dbReference type="PDB" id="3EUF">
    <property type="method" value="X-ray"/>
    <property type="resolution" value="1.90 A"/>
    <property type="chains" value="A/B/C/D=1-310"/>
</dbReference>
<dbReference type="PDB" id="3NBQ">
    <property type="method" value="X-ray"/>
    <property type="resolution" value="2.30 A"/>
    <property type="chains" value="A/B/C/D=1-310"/>
</dbReference>
<dbReference type="PDBsum" id="3EUE"/>
<dbReference type="PDBsum" id="3EUF"/>
<dbReference type="PDBsum" id="3NBQ"/>
<dbReference type="SMR" id="Q16831"/>
<dbReference type="BioGRID" id="113224">
    <property type="interactions" value="107"/>
</dbReference>
<dbReference type="FunCoup" id="Q16831">
    <property type="interactions" value="944"/>
</dbReference>
<dbReference type="IntAct" id="Q16831">
    <property type="interactions" value="69"/>
</dbReference>
<dbReference type="MINT" id="Q16831"/>
<dbReference type="STRING" id="9606.ENSP00000330032"/>
<dbReference type="BindingDB" id="Q16831"/>
<dbReference type="ChEMBL" id="CHEMBL4811"/>
<dbReference type="DrugBank" id="DB07437">
    <property type="generic name" value="5-Benzylacyclouridine"/>
</dbReference>
<dbReference type="DrugBank" id="DB01101">
    <property type="generic name" value="Capecitabine"/>
</dbReference>
<dbReference type="DrugBank" id="DB00544">
    <property type="generic name" value="Fluorouracil"/>
</dbReference>
<dbReference type="GlyGen" id="Q16831">
    <property type="glycosylation" value="1 site, 1 O-linked glycan (1 site)"/>
</dbReference>
<dbReference type="iPTMnet" id="Q16831"/>
<dbReference type="PhosphoSitePlus" id="Q16831"/>
<dbReference type="BioMuta" id="UPP1"/>
<dbReference type="DMDM" id="2494059"/>
<dbReference type="jPOST" id="Q16831"/>
<dbReference type="MassIVE" id="Q16831"/>
<dbReference type="PaxDb" id="9606-ENSP00000330032"/>
<dbReference type="PeptideAtlas" id="Q16831"/>
<dbReference type="ProteomicsDB" id="61093">
    <molecule id="Q16831-1"/>
</dbReference>
<dbReference type="ProteomicsDB" id="61094">
    <molecule id="Q16831-2"/>
</dbReference>
<dbReference type="Pumba" id="Q16831"/>
<dbReference type="Antibodypedia" id="27594">
    <property type="antibodies" value="164 antibodies from 25 providers"/>
</dbReference>
<dbReference type="DNASU" id="7378"/>
<dbReference type="Ensembl" id="ENST00000331803.8">
    <molecule id="Q16831-1"/>
    <property type="protein sequence ID" value="ENSP00000330032.4"/>
    <property type="gene ID" value="ENSG00000183696.14"/>
</dbReference>
<dbReference type="Ensembl" id="ENST00000395560.7">
    <molecule id="Q16831-2"/>
    <property type="protein sequence ID" value="ENSP00000378927.3"/>
    <property type="gene ID" value="ENSG00000183696.14"/>
</dbReference>
<dbReference type="Ensembl" id="ENST00000395564.9">
    <molecule id="Q16831-1"/>
    <property type="protein sequence ID" value="ENSP00000378931.4"/>
    <property type="gene ID" value="ENSG00000183696.14"/>
</dbReference>
<dbReference type="Ensembl" id="ENST00000417464.6">
    <molecule id="Q16831-2"/>
    <property type="protein sequence ID" value="ENSP00000413611.2"/>
    <property type="gene ID" value="ENSG00000183696.14"/>
</dbReference>
<dbReference type="Ensembl" id="ENST00000457596.5">
    <molecule id="Q16831-2"/>
    <property type="protein sequence ID" value="ENSP00000408899.1"/>
    <property type="gene ID" value="ENSG00000183696.14"/>
</dbReference>
<dbReference type="GeneID" id="7378"/>
<dbReference type="KEGG" id="hsa:7378"/>
<dbReference type="MANE-Select" id="ENST00000395564.9">
    <property type="protein sequence ID" value="ENSP00000378931.4"/>
    <property type="RefSeq nucleotide sequence ID" value="NM_003364.4"/>
    <property type="RefSeq protein sequence ID" value="NP_003355.1"/>
</dbReference>
<dbReference type="UCSC" id="uc003tok.5">
    <molecule id="Q16831-1"/>
    <property type="organism name" value="human"/>
</dbReference>
<dbReference type="AGR" id="HGNC:12576"/>
<dbReference type="CTD" id="7378"/>
<dbReference type="DisGeNET" id="7378"/>
<dbReference type="GeneCards" id="UPP1"/>
<dbReference type="HGNC" id="HGNC:12576">
    <property type="gene designation" value="UPP1"/>
</dbReference>
<dbReference type="HPA" id="ENSG00000183696">
    <property type="expression patterns" value="Tissue enhanced (esophagus)"/>
</dbReference>
<dbReference type="MalaCards" id="UPP1"/>
<dbReference type="MIM" id="191730">
    <property type="type" value="gene"/>
</dbReference>
<dbReference type="neXtProt" id="NX_Q16831"/>
<dbReference type="OpenTargets" id="ENSG00000183696"/>
<dbReference type="PharmGKB" id="PA365"/>
<dbReference type="VEuPathDB" id="HostDB:ENSG00000183696"/>
<dbReference type="eggNOG" id="KOG3728">
    <property type="taxonomic scope" value="Eukaryota"/>
</dbReference>
<dbReference type="GeneTree" id="ENSGT00940000157781"/>
<dbReference type="HOGENOM" id="CLU_054104_0_0_1"/>
<dbReference type="InParanoid" id="Q16831"/>
<dbReference type="OMA" id="HPNICAG"/>
<dbReference type="OrthoDB" id="204058at2759"/>
<dbReference type="PAN-GO" id="Q16831">
    <property type="GO annotations" value="3 GO annotations based on evolutionary models"/>
</dbReference>
<dbReference type="PhylomeDB" id="Q16831"/>
<dbReference type="TreeFam" id="TF314310"/>
<dbReference type="BioCyc" id="MetaCyc:HS00053-MONOMER"/>
<dbReference type="BRENDA" id="2.4.2.3">
    <property type="organism ID" value="2681"/>
</dbReference>
<dbReference type="PathwayCommons" id="Q16831"/>
<dbReference type="Reactome" id="R-HSA-73614">
    <property type="pathway name" value="Pyrimidine salvage"/>
</dbReference>
<dbReference type="Reactome" id="R-HSA-73621">
    <property type="pathway name" value="Pyrimidine catabolism"/>
</dbReference>
<dbReference type="SABIO-RK" id="Q16831"/>
<dbReference type="SignaLink" id="Q16831"/>
<dbReference type="UniPathway" id="UPA00574">
    <property type="reaction ID" value="UER00633"/>
</dbReference>
<dbReference type="BioGRID-ORCS" id="7378">
    <property type="hits" value="17 hits in 1151 CRISPR screens"/>
</dbReference>
<dbReference type="ChiTaRS" id="UPP1">
    <property type="organism name" value="human"/>
</dbReference>
<dbReference type="EvolutionaryTrace" id="Q16831"/>
<dbReference type="GeneWiki" id="UPP1"/>
<dbReference type="GenomeRNAi" id="7378"/>
<dbReference type="Pharos" id="Q16831">
    <property type="development level" value="Tchem"/>
</dbReference>
<dbReference type="PRO" id="PR:Q16831"/>
<dbReference type="Proteomes" id="UP000005640">
    <property type="component" value="Chromosome 7"/>
</dbReference>
<dbReference type="RNAct" id="Q16831">
    <property type="molecule type" value="protein"/>
</dbReference>
<dbReference type="Bgee" id="ENSG00000183696">
    <property type="expression patterns" value="Expressed in lower esophagus mucosa and 155 other cell types or tissues"/>
</dbReference>
<dbReference type="ExpressionAtlas" id="Q16831">
    <property type="expression patterns" value="baseline and differential"/>
</dbReference>
<dbReference type="GO" id="GO:0005829">
    <property type="term" value="C:cytosol"/>
    <property type="evidence" value="ECO:0000318"/>
    <property type="project" value="GO_Central"/>
</dbReference>
<dbReference type="GO" id="GO:0005654">
    <property type="term" value="C:nucleoplasm"/>
    <property type="evidence" value="ECO:0000314"/>
    <property type="project" value="HPA"/>
</dbReference>
<dbReference type="GO" id="GO:0047847">
    <property type="term" value="F:deoxyuridine phosphorylase activity"/>
    <property type="evidence" value="ECO:0007669"/>
    <property type="project" value="Ensembl"/>
</dbReference>
<dbReference type="GO" id="GO:0042802">
    <property type="term" value="F:identical protein binding"/>
    <property type="evidence" value="ECO:0000353"/>
    <property type="project" value="UniProtKB"/>
</dbReference>
<dbReference type="GO" id="GO:0009032">
    <property type="term" value="F:thymidine phosphorylase activity"/>
    <property type="evidence" value="ECO:0007669"/>
    <property type="project" value="Ensembl"/>
</dbReference>
<dbReference type="GO" id="GO:0004850">
    <property type="term" value="F:uridine phosphorylase activity"/>
    <property type="evidence" value="ECO:0000314"/>
    <property type="project" value="UniProtKB"/>
</dbReference>
<dbReference type="GO" id="GO:0042149">
    <property type="term" value="P:cellular response to glucose starvation"/>
    <property type="evidence" value="ECO:0007669"/>
    <property type="project" value="Ensembl"/>
</dbReference>
<dbReference type="GO" id="GO:0006248">
    <property type="term" value="P:CMP catabolic process"/>
    <property type="evidence" value="ECO:0007669"/>
    <property type="project" value="Ensembl"/>
</dbReference>
<dbReference type="GO" id="GO:0006249">
    <property type="term" value="P:dCMP catabolic process"/>
    <property type="evidence" value="ECO:0007669"/>
    <property type="project" value="Ensembl"/>
</dbReference>
<dbReference type="GO" id="GO:0046074">
    <property type="term" value="P:dTMP catabolic process"/>
    <property type="evidence" value="ECO:0007669"/>
    <property type="project" value="Ensembl"/>
</dbReference>
<dbReference type="GO" id="GO:0046079">
    <property type="term" value="P:dUMP catabolic process"/>
    <property type="evidence" value="ECO:0007669"/>
    <property type="project" value="Ensembl"/>
</dbReference>
<dbReference type="GO" id="GO:0006139">
    <property type="term" value="P:nucleobase-containing compound metabolic process"/>
    <property type="evidence" value="ECO:0000304"/>
    <property type="project" value="ProtInc"/>
</dbReference>
<dbReference type="GO" id="GO:0046050">
    <property type="term" value="P:UMP catabolic process"/>
    <property type="evidence" value="ECO:0007669"/>
    <property type="project" value="Ensembl"/>
</dbReference>
<dbReference type="GO" id="GO:0044206">
    <property type="term" value="P:UMP salvage"/>
    <property type="evidence" value="ECO:0007669"/>
    <property type="project" value="UniProtKB-UniPathway"/>
</dbReference>
<dbReference type="GO" id="GO:0006218">
    <property type="term" value="P:uridine catabolic process"/>
    <property type="evidence" value="ECO:0000314"/>
    <property type="project" value="UniProtKB"/>
</dbReference>
<dbReference type="CDD" id="cd17763">
    <property type="entry name" value="UP_hUPP-like"/>
    <property type="match status" value="1"/>
</dbReference>
<dbReference type="FunFam" id="3.40.50.1580:FF:000009">
    <property type="entry name" value="Uridine phosphorylase 2"/>
    <property type="match status" value="1"/>
</dbReference>
<dbReference type="Gene3D" id="3.40.50.1580">
    <property type="entry name" value="Nucleoside phosphorylase domain"/>
    <property type="match status" value="1"/>
</dbReference>
<dbReference type="InterPro" id="IPR018016">
    <property type="entry name" value="Nucleoside_phosphorylase_CS"/>
</dbReference>
<dbReference type="InterPro" id="IPR000845">
    <property type="entry name" value="Nucleoside_phosphorylase_d"/>
</dbReference>
<dbReference type="InterPro" id="IPR035994">
    <property type="entry name" value="Nucleoside_phosphorylase_sf"/>
</dbReference>
<dbReference type="InterPro" id="IPR010059">
    <property type="entry name" value="Uridine_phosphorylase_euk"/>
</dbReference>
<dbReference type="NCBIfam" id="TIGR01719">
    <property type="entry name" value="euk_UDPppase"/>
    <property type="match status" value="1"/>
</dbReference>
<dbReference type="PANTHER" id="PTHR43691">
    <property type="entry name" value="URIDINE PHOSPHORYLASE"/>
    <property type="match status" value="1"/>
</dbReference>
<dbReference type="PANTHER" id="PTHR43691:SF10">
    <property type="entry name" value="URIDINE PHOSPHORYLASE 1"/>
    <property type="match status" value="1"/>
</dbReference>
<dbReference type="Pfam" id="PF01048">
    <property type="entry name" value="PNP_UDP_1"/>
    <property type="match status" value="1"/>
</dbReference>
<dbReference type="SUPFAM" id="SSF53167">
    <property type="entry name" value="Purine and uridine phosphorylases"/>
    <property type="match status" value="1"/>
</dbReference>
<dbReference type="PROSITE" id="PS01232">
    <property type="entry name" value="PNP_UDP_1"/>
    <property type="match status" value="1"/>
</dbReference>
<evidence type="ECO:0000269" key="1">
    <source>
    </source>
</evidence>
<evidence type="ECO:0000269" key="2">
    <source>
    </source>
</evidence>
<evidence type="ECO:0000269" key="3">
    <source>
    </source>
</evidence>
<evidence type="ECO:0000303" key="4">
    <source>
    </source>
</evidence>
<evidence type="ECO:0000303" key="5">
    <source>
    </source>
</evidence>
<evidence type="ECO:0000305" key="6"/>
<evidence type="ECO:0000305" key="7">
    <source>
    </source>
</evidence>
<evidence type="ECO:0000305" key="8">
    <source>
    </source>
</evidence>
<evidence type="ECO:0000305" key="9">
    <source>
    </source>
</evidence>
<evidence type="ECO:0000305" key="10">
    <source>
    </source>
</evidence>
<evidence type="ECO:0000312" key="11">
    <source>
        <dbReference type="HGNC" id="HGNC:12576"/>
    </source>
</evidence>
<evidence type="ECO:0007744" key="12">
    <source>
        <dbReference type="PDB" id="3EUF"/>
    </source>
</evidence>
<evidence type="ECO:0007744" key="13">
    <source>
        <dbReference type="PDB" id="3NBQ"/>
    </source>
</evidence>
<evidence type="ECO:0007829" key="14">
    <source>
        <dbReference type="PDB" id="3EUE"/>
    </source>
</evidence>
<evidence type="ECO:0007829" key="15">
    <source>
        <dbReference type="PDB" id="3EUF"/>
    </source>
</evidence>
<proteinExistence type="evidence at protein level"/>